<protein>
    <recommendedName>
        <fullName evidence="1">Translation initiation factor 6</fullName>
        <shortName evidence="1">aIF-6</shortName>
    </recommendedName>
</protein>
<name>IF6_SACI6</name>
<sequence>MNLQRLSIFGTDNIGVYIYTNNKYTVVPRGLDSETKENIVQILGTELIEAEISRSFLLGIFISGNDNGILLPKSTIDDEFRFLKENLRDCRVEVLNSKVTALGNTILTNNKAALIYPEFNDIEEKIIKETLGVEEIRRGKIAQMITVGSVGVVTNKGGLVHVDTSEKELKELEKLFGVKIDIGTVNFGSVFIRSGLVANDKGTLVGASTTGPEILRIQKALGE</sequence>
<organism>
    <name type="scientific">Saccharolobus islandicus (strain M.16.4 / Kamchatka #3)</name>
    <name type="common">Sulfolobus islandicus</name>
    <dbReference type="NCBI Taxonomy" id="426118"/>
    <lineage>
        <taxon>Archaea</taxon>
        <taxon>Thermoproteota</taxon>
        <taxon>Thermoprotei</taxon>
        <taxon>Sulfolobales</taxon>
        <taxon>Sulfolobaceae</taxon>
        <taxon>Saccharolobus</taxon>
    </lineage>
</organism>
<feature type="chain" id="PRO_1000202008" description="Translation initiation factor 6">
    <location>
        <begin position="1"/>
        <end position="223"/>
    </location>
</feature>
<comment type="function">
    <text evidence="1">Binds to the 50S ribosomal subunit and prevents its association with the 30S ribosomal subunit to form the 70S initiation complex.</text>
</comment>
<comment type="similarity">
    <text evidence="1">Belongs to the eIF-6 family.</text>
</comment>
<gene>
    <name evidence="1" type="primary">eif6</name>
    <name type="ordered locus">M164_1802</name>
</gene>
<proteinExistence type="inferred from homology"/>
<evidence type="ECO:0000255" key="1">
    <source>
        <dbReference type="HAMAP-Rule" id="MF_00032"/>
    </source>
</evidence>
<accession>C4KIJ1</accession>
<keyword id="KW-0396">Initiation factor</keyword>
<keyword id="KW-0648">Protein biosynthesis</keyword>
<reference key="1">
    <citation type="journal article" date="2009" name="Proc. Natl. Acad. Sci. U.S.A.">
        <title>Biogeography of the Sulfolobus islandicus pan-genome.</title>
        <authorList>
            <person name="Reno M.L."/>
            <person name="Held N.L."/>
            <person name="Fields C.J."/>
            <person name="Burke P.V."/>
            <person name="Whitaker R.J."/>
        </authorList>
    </citation>
    <scope>NUCLEOTIDE SEQUENCE [LARGE SCALE GENOMIC DNA]</scope>
    <source>
        <strain>M.16.4 / Kamchatka #3</strain>
    </source>
</reference>
<dbReference type="EMBL" id="CP001402">
    <property type="protein sequence ID" value="ACR42405.1"/>
    <property type="molecule type" value="Genomic_DNA"/>
</dbReference>
<dbReference type="RefSeq" id="WP_012711731.1">
    <property type="nucleotide sequence ID" value="NC_012726.1"/>
</dbReference>
<dbReference type="SMR" id="C4KIJ1"/>
<dbReference type="KEGG" id="sid:M164_1802"/>
<dbReference type="HOGENOM" id="CLU_071894_1_0_2"/>
<dbReference type="Proteomes" id="UP000001479">
    <property type="component" value="Chromosome"/>
</dbReference>
<dbReference type="GO" id="GO:0043022">
    <property type="term" value="F:ribosome binding"/>
    <property type="evidence" value="ECO:0007669"/>
    <property type="project" value="InterPro"/>
</dbReference>
<dbReference type="GO" id="GO:0003743">
    <property type="term" value="F:translation initiation factor activity"/>
    <property type="evidence" value="ECO:0007669"/>
    <property type="project" value="UniProtKB-UniRule"/>
</dbReference>
<dbReference type="GO" id="GO:0042256">
    <property type="term" value="P:cytosolic ribosome assembly"/>
    <property type="evidence" value="ECO:0007669"/>
    <property type="project" value="InterPro"/>
</dbReference>
<dbReference type="FunFam" id="3.75.10.10:FF:000011">
    <property type="entry name" value="Translation initiation factor 6"/>
    <property type="match status" value="1"/>
</dbReference>
<dbReference type="Gene3D" id="3.75.10.10">
    <property type="entry name" value="L-arginine/glycine Amidinotransferase, Chain A"/>
    <property type="match status" value="1"/>
</dbReference>
<dbReference type="HAMAP" id="MF_00032">
    <property type="entry name" value="eIF_6"/>
    <property type="match status" value="1"/>
</dbReference>
<dbReference type="InterPro" id="IPR002769">
    <property type="entry name" value="eIF6"/>
</dbReference>
<dbReference type="NCBIfam" id="TIGR00323">
    <property type="entry name" value="eIF-6"/>
    <property type="match status" value="1"/>
</dbReference>
<dbReference type="NCBIfam" id="NF003126">
    <property type="entry name" value="PRK04046.1-1"/>
    <property type="match status" value="1"/>
</dbReference>
<dbReference type="PANTHER" id="PTHR10784">
    <property type="entry name" value="TRANSLATION INITIATION FACTOR 6"/>
    <property type="match status" value="1"/>
</dbReference>
<dbReference type="Pfam" id="PF01912">
    <property type="entry name" value="eIF-6"/>
    <property type="match status" value="1"/>
</dbReference>
<dbReference type="PIRSF" id="PIRSF006413">
    <property type="entry name" value="IF-6"/>
    <property type="match status" value="1"/>
</dbReference>
<dbReference type="SMART" id="SM00654">
    <property type="entry name" value="eIF6"/>
    <property type="match status" value="1"/>
</dbReference>
<dbReference type="SUPFAM" id="SSF55909">
    <property type="entry name" value="Pentein"/>
    <property type="match status" value="1"/>
</dbReference>